<organism>
    <name type="scientific">Chromohalobacter salexigens (strain ATCC BAA-138 / DSM 3043 / CIP 106854 / NCIMB 13768 / 1H11)</name>
    <dbReference type="NCBI Taxonomy" id="290398"/>
    <lineage>
        <taxon>Bacteria</taxon>
        <taxon>Pseudomonadati</taxon>
        <taxon>Pseudomonadota</taxon>
        <taxon>Gammaproteobacteria</taxon>
        <taxon>Oceanospirillales</taxon>
        <taxon>Halomonadaceae</taxon>
        <taxon>Chromohalobacter</taxon>
    </lineage>
</organism>
<proteinExistence type="inferred from homology"/>
<reference key="1">
    <citation type="journal article" date="2011" name="Stand. Genomic Sci.">
        <title>Complete genome sequence of the halophilic and highly halotolerant Chromohalobacter salexigens type strain (1H11(T)).</title>
        <authorList>
            <person name="Copeland A."/>
            <person name="O'Connor K."/>
            <person name="Lucas S."/>
            <person name="Lapidus A."/>
            <person name="Berry K.W."/>
            <person name="Detter J.C."/>
            <person name="Del Rio T.G."/>
            <person name="Hammon N."/>
            <person name="Dalin E."/>
            <person name="Tice H."/>
            <person name="Pitluck S."/>
            <person name="Bruce D."/>
            <person name="Goodwin L."/>
            <person name="Han C."/>
            <person name="Tapia R."/>
            <person name="Saunders E."/>
            <person name="Schmutz J."/>
            <person name="Brettin T."/>
            <person name="Larimer F."/>
            <person name="Land M."/>
            <person name="Hauser L."/>
            <person name="Vargas C."/>
            <person name="Nieto J.J."/>
            <person name="Kyrpides N.C."/>
            <person name="Ivanova N."/>
            <person name="Goker M."/>
            <person name="Klenk H.P."/>
            <person name="Csonka L.N."/>
            <person name="Woyke T."/>
        </authorList>
    </citation>
    <scope>NUCLEOTIDE SEQUENCE [LARGE SCALE GENOMIC DNA]</scope>
    <source>
        <strain>ATCC BAA-138 / DSM 3043 / CIP 106854 / NCIMB 13768 / 1H11</strain>
    </source>
</reference>
<comment type="function">
    <text evidence="2">Cell wall formation.</text>
</comment>
<comment type="catalytic activity">
    <reaction evidence="2">
        <text>2 D-alanine + ATP = D-alanyl-D-alanine + ADP + phosphate + H(+)</text>
        <dbReference type="Rhea" id="RHEA:11224"/>
        <dbReference type="ChEBI" id="CHEBI:15378"/>
        <dbReference type="ChEBI" id="CHEBI:30616"/>
        <dbReference type="ChEBI" id="CHEBI:43474"/>
        <dbReference type="ChEBI" id="CHEBI:57416"/>
        <dbReference type="ChEBI" id="CHEBI:57822"/>
        <dbReference type="ChEBI" id="CHEBI:456216"/>
        <dbReference type="EC" id="6.3.2.4"/>
    </reaction>
</comment>
<comment type="cofactor">
    <cofactor evidence="1">
        <name>Mg(2+)</name>
        <dbReference type="ChEBI" id="CHEBI:18420"/>
    </cofactor>
    <cofactor evidence="1">
        <name>Mn(2+)</name>
        <dbReference type="ChEBI" id="CHEBI:29035"/>
    </cofactor>
    <text evidence="1">Binds 2 magnesium or manganese ions per subunit.</text>
</comment>
<comment type="pathway">
    <text evidence="2">Cell wall biogenesis; peptidoglycan biosynthesis.</text>
</comment>
<comment type="subcellular location">
    <subcellularLocation>
        <location evidence="2">Cytoplasm</location>
    </subcellularLocation>
</comment>
<comment type="similarity">
    <text evidence="2">Belongs to the D-alanine--D-alanine ligase family.</text>
</comment>
<name>DDL_CHRSD</name>
<dbReference type="EC" id="6.3.2.4" evidence="2"/>
<dbReference type="EMBL" id="CP000285">
    <property type="protein sequence ID" value="ABE59539.1"/>
    <property type="molecule type" value="Genomic_DNA"/>
</dbReference>
<dbReference type="RefSeq" id="WP_011507485.1">
    <property type="nucleotide sequence ID" value="NC_007963.1"/>
</dbReference>
<dbReference type="SMR" id="Q1QVG9"/>
<dbReference type="STRING" id="290398.Csal_2188"/>
<dbReference type="GeneID" id="95334906"/>
<dbReference type="KEGG" id="csa:Csal_2188"/>
<dbReference type="eggNOG" id="COG1181">
    <property type="taxonomic scope" value="Bacteria"/>
</dbReference>
<dbReference type="HOGENOM" id="CLU_039268_1_2_6"/>
<dbReference type="OrthoDB" id="9813261at2"/>
<dbReference type="UniPathway" id="UPA00219"/>
<dbReference type="Proteomes" id="UP000000239">
    <property type="component" value="Chromosome"/>
</dbReference>
<dbReference type="GO" id="GO:0005829">
    <property type="term" value="C:cytosol"/>
    <property type="evidence" value="ECO:0007669"/>
    <property type="project" value="TreeGrafter"/>
</dbReference>
<dbReference type="GO" id="GO:0005524">
    <property type="term" value="F:ATP binding"/>
    <property type="evidence" value="ECO:0007669"/>
    <property type="project" value="UniProtKB-KW"/>
</dbReference>
<dbReference type="GO" id="GO:0008716">
    <property type="term" value="F:D-alanine-D-alanine ligase activity"/>
    <property type="evidence" value="ECO:0007669"/>
    <property type="project" value="UniProtKB-UniRule"/>
</dbReference>
<dbReference type="GO" id="GO:0046872">
    <property type="term" value="F:metal ion binding"/>
    <property type="evidence" value="ECO:0007669"/>
    <property type="project" value="UniProtKB-KW"/>
</dbReference>
<dbReference type="GO" id="GO:0071555">
    <property type="term" value="P:cell wall organization"/>
    <property type="evidence" value="ECO:0007669"/>
    <property type="project" value="UniProtKB-KW"/>
</dbReference>
<dbReference type="GO" id="GO:0009252">
    <property type="term" value="P:peptidoglycan biosynthetic process"/>
    <property type="evidence" value="ECO:0007669"/>
    <property type="project" value="UniProtKB-UniRule"/>
</dbReference>
<dbReference type="GO" id="GO:0008360">
    <property type="term" value="P:regulation of cell shape"/>
    <property type="evidence" value="ECO:0007669"/>
    <property type="project" value="UniProtKB-KW"/>
</dbReference>
<dbReference type="FunFam" id="3.30.470.20:FF:000008">
    <property type="entry name" value="D-alanine--D-alanine ligase"/>
    <property type="match status" value="1"/>
</dbReference>
<dbReference type="Gene3D" id="3.40.50.20">
    <property type="match status" value="1"/>
</dbReference>
<dbReference type="Gene3D" id="3.30.1490.20">
    <property type="entry name" value="ATP-grasp fold, A domain"/>
    <property type="match status" value="1"/>
</dbReference>
<dbReference type="Gene3D" id="3.30.470.20">
    <property type="entry name" value="ATP-grasp fold, B domain"/>
    <property type="match status" value="1"/>
</dbReference>
<dbReference type="HAMAP" id="MF_00047">
    <property type="entry name" value="Dala_Dala_lig"/>
    <property type="match status" value="1"/>
</dbReference>
<dbReference type="InterPro" id="IPR011761">
    <property type="entry name" value="ATP-grasp"/>
</dbReference>
<dbReference type="InterPro" id="IPR013815">
    <property type="entry name" value="ATP_grasp_subdomain_1"/>
</dbReference>
<dbReference type="InterPro" id="IPR000291">
    <property type="entry name" value="D-Ala_lig_Van_CS"/>
</dbReference>
<dbReference type="InterPro" id="IPR005905">
    <property type="entry name" value="D_ala_D_ala"/>
</dbReference>
<dbReference type="InterPro" id="IPR011095">
    <property type="entry name" value="Dala_Dala_lig_C"/>
</dbReference>
<dbReference type="InterPro" id="IPR011127">
    <property type="entry name" value="Dala_Dala_lig_N"/>
</dbReference>
<dbReference type="InterPro" id="IPR016185">
    <property type="entry name" value="PreATP-grasp_dom_sf"/>
</dbReference>
<dbReference type="NCBIfam" id="TIGR01205">
    <property type="entry name" value="D_ala_D_alaTIGR"/>
    <property type="match status" value="1"/>
</dbReference>
<dbReference type="NCBIfam" id="NF002378">
    <property type="entry name" value="PRK01372.1"/>
    <property type="match status" value="1"/>
</dbReference>
<dbReference type="PANTHER" id="PTHR23132">
    <property type="entry name" value="D-ALANINE--D-ALANINE LIGASE"/>
    <property type="match status" value="1"/>
</dbReference>
<dbReference type="PANTHER" id="PTHR23132:SF23">
    <property type="entry name" value="D-ALANINE--D-ALANINE LIGASE B"/>
    <property type="match status" value="1"/>
</dbReference>
<dbReference type="Pfam" id="PF07478">
    <property type="entry name" value="Dala_Dala_lig_C"/>
    <property type="match status" value="1"/>
</dbReference>
<dbReference type="Pfam" id="PF01820">
    <property type="entry name" value="Dala_Dala_lig_N"/>
    <property type="match status" value="1"/>
</dbReference>
<dbReference type="PIRSF" id="PIRSF039102">
    <property type="entry name" value="Ddl/VanB"/>
    <property type="match status" value="1"/>
</dbReference>
<dbReference type="SUPFAM" id="SSF56059">
    <property type="entry name" value="Glutathione synthetase ATP-binding domain-like"/>
    <property type="match status" value="1"/>
</dbReference>
<dbReference type="SUPFAM" id="SSF52440">
    <property type="entry name" value="PreATP-grasp domain"/>
    <property type="match status" value="1"/>
</dbReference>
<dbReference type="PROSITE" id="PS50975">
    <property type="entry name" value="ATP_GRASP"/>
    <property type="match status" value="1"/>
</dbReference>
<dbReference type="PROSITE" id="PS00843">
    <property type="entry name" value="DALA_DALA_LIGASE_1"/>
    <property type="match status" value="1"/>
</dbReference>
<dbReference type="PROSITE" id="PS00844">
    <property type="entry name" value="DALA_DALA_LIGASE_2"/>
    <property type="match status" value="1"/>
</dbReference>
<evidence type="ECO:0000250" key="1"/>
<evidence type="ECO:0000255" key="2">
    <source>
        <dbReference type="HAMAP-Rule" id="MF_00047"/>
    </source>
</evidence>
<keyword id="KW-0067">ATP-binding</keyword>
<keyword id="KW-0133">Cell shape</keyword>
<keyword id="KW-0961">Cell wall biogenesis/degradation</keyword>
<keyword id="KW-0963">Cytoplasm</keyword>
<keyword id="KW-0436">Ligase</keyword>
<keyword id="KW-0460">Magnesium</keyword>
<keyword id="KW-0464">Manganese</keyword>
<keyword id="KW-0479">Metal-binding</keyword>
<keyword id="KW-0547">Nucleotide-binding</keyword>
<keyword id="KW-0573">Peptidoglycan synthesis</keyword>
<keyword id="KW-1185">Reference proteome</keyword>
<accession>Q1QVG9</accession>
<sequence>MSDTVTDGDASRRRHGRVVVVYGGRSAEREVSLLSGGAVLASLVRSGVDAHGFDFAGGGLSGLEALAPDRVFIAMHGRDGEDGSLQGALELLGIPYTGSGVLASALGMDKERTKQLWRAHGLPTPESVMLEGEPDWDAVIEALGLPLIVKPVHEGSTIGISIVETRDALIAAHAEASRFDSAIMAERFVQGEEYTVSLLGDEVLPAIRVEVPSGFYDYEAKYHSDTTRYLLPCGLEQEEERMLGDVCRRAFEAIGGRGWGRVDVMRDAQGRFWLLEVNTVPGMTDHSLVPQAAAHAGLDFDALVLRILDTTTGS</sequence>
<feature type="chain" id="PRO_0000341082" description="D-alanine--D-alanine ligase">
    <location>
        <begin position="1"/>
        <end position="314"/>
    </location>
</feature>
<feature type="domain" description="ATP-grasp" evidence="2">
    <location>
        <begin position="114"/>
        <end position="309"/>
    </location>
</feature>
<feature type="binding site" evidence="2">
    <location>
        <begin position="140"/>
        <end position="195"/>
    </location>
    <ligand>
        <name>ATP</name>
        <dbReference type="ChEBI" id="CHEBI:30616"/>
    </ligand>
</feature>
<feature type="binding site" evidence="2">
    <location>
        <position position="263"/>
    </location>
    <ligand>
        <name>Mg(2+)</name>
        <dbReference type="ChEBI" id="CHEBI:18420"/>
        <label>1</label>
    </ligand>
</feature>
<feature type="binding site" evidence="2">
    <location>
        <position position="276"/>
    </location>
    <ligand>
        <name>Mg(2+)</name>
        <dbReference type="ChEBI" id="CHEBI:18420"/>
        <label>1</label>
    </ligand>
</feature>
<feature type="binding site" evidence="2">
    <location>
        <position position="276"/>
    </location>
    <ligand>
        <name>Mg(2+)</name>
        <dbReference type="ChEBI" id="CHEBI:18420"/>
        <label>2</label>
    </ligand>
</feature>
<feature type="binding site" evidence="2">
    <location>
        <position position="278"/>
    </location>
    <ligand>
        <name>Mg(2+)</name>
        <dbReference type="ChEBI" id="CHEBI:18420"/>
        <label>2</label>
    </ligand>
</feature>
<protein>
    <recommendedName>
        <fullName evidence="2">D-alanine--D-alanine ligase</fullName>
        <ecNumber evidence="2">6.3.2.4</ecNumber>
    </recommendedName>
    <alternativeName>
        <fullName evidence="2">D-Ala-D-Ala ligase</fullName>
    </alternativeName>
    <alternativeName>
        <fullName evidence="2">D-alanylalanine synthetase</fullName>
    </alternativeName>
</protein>
<gene>
    <name evidence="2" type="primary">ddl</name>
    <name type="ordered locus">Csal_2188</name>
</gene>